<evidence type="ECO:0000255" key="1">
    <source>
        <dbReference type="HAMAP-Rule" id="MF_00412"/>
    </source>
</evidence>
<proteinExistence type="inferred from homology"/>
<organism>
    <name type="scientific">Streptococcus suis (strain 98HAH33)</name>
    <dbReference type="NCBI Taxonomy" id="391296"/>
    <lineage>
        <taxon>Bacteria</taxon>
        <taxon>Bacillati</taxon>
        <taxon>Bacillota</taxon>
        <taxon>Bacilli</taxon>
        <taxon>Lactobacillales</taxon>
        <taxon>Streptococcaceae</taxon>
        <taxon>Streptococcus</taxon>
    </lineage>
</organism>
<comment type="function">
    <text evidence="1">Catalyzes the NADPH-dependent reduction of L-glutamate 5-phosphate into L-glutamate 5-semialdehyde and phosphate. The product spontaneously undergoes cyclization to form 1-pyrroline-5-carboxylate.</text>
</comment>
<comment type="catalytic activity">
    <reaction evidence="1">
        <text>L-glutamate 5-semialdehyde + phosphate + NADP(+) = L-glutamyl 5-phosphate + NADPH + H(+)</text>
        <dbReference type="Rhea" id="RHEA:19541"/>
        <dbReference type="ChEBI" id="CHEBI:15378"/>
        <dbReference type="ChEBI" id="CHEBI:43474"/>
        <dbReference type="ChEBI" id="CHEBI:57783"/>
        <dbReference type="ChEBI" id="CHEBI:58066"/>
        <dbReference type="ChEBI" id="CHEBI:58274"/>
        <dbReference type="ChEBI" id="CHEBI:58349"/>
        <dbReference type="EC" id="1.2.1.41"/>
    </reaction>
</comment>
<comment type="pathway">
    <text evidence="1">Amino-acid biosynthesis; L-proline biosynthesis; L-glutamate 5-semialdehyde from L-glutamate: step 2/2.</text>
</comment>
<comment type="subcellular location">
    <subcellularLocation>
        <location evidence="1">Cytoplasm</location>
    </subcellularLocation>
</comment>
<comment type="similarity">
    <text evidence="1">Belongs to the gamma-glutamyl phosphate reductase family.</text>
</comment>
<feature type="chain" id="PRO_1000049997" description="Gamma-glutamyl phosphate reductase">
    <location>
        <begin position="1"/>
        <end position="412"/>
    </location>
</feature>
<gene>
    <name evidence="1" type="primary">proA</name>
    <name type="ordered locus">SSU98_0559</name>
</gene>
<dbReference type="EC" id="1.2.1.41" evidence="1"/>
<dbReference type="EMBL" id="CP000408">
    <property type="protein sequence ID" value="ABP91717.1"/>
    <property type="molecule type" value="Genomic_DNA"/>
</dbReference>
<dbReference type="SMR" id="A4W028"/>
<dbReference type="KEGG" id="ssv:SSU98_0559"/>
<dbReference type="HOGENOM" id="CLU_030231_0_0_9"/>
<dbReference type="UniPathway" id="UPA00098">
    <property type="reaction ID" value="UER00360"/>
</dbReference>
<dbReference type="GO" id="GO:0005737">
    <property type="term" value="C:cytoplasm"/>
    <property type="evidence" value="ECO:0007669"/>
    <property type="project" value="UniProtKB-SubCell"/>
</dbReference>
<dbReference type="GO" id="GO:0004350">
    <property type="term" value="F:glutamate-5-semialdehyde dehydrogenase activity"/>
    <property type="evidence" value="ECO:0007669"/>
    <property type="project" value="UniProtKB-UniRule"/>
</dbReference>
<dbReference type="GO" id="GO:0050661">
    <property type="term" value="F:NADP binding"/>
    <property type="evidence" value="ECO:0007669"/>
    <property type="project" value="InterPro"/>
</dbReference>
<dbReference type="GO" id="GO:0055129">
    <property type="term" value="P:L-proline biosynthetic process"/>
    <property type="evidence" value="ECO:0007669"/>
    <property type="project" value="UniProtKB-UniRule"/>
</dbReference>
<dbReference type="CDD" id="cd07079">
    <property type="entry name" value="ALDH_F18-19_ProA-GPR"/>
    <property type="match status" value="1"/>
</dbReference>
<dbReference type="FunFam" id="3.40.309.10:FF:000006">
    <property type="entry name" value="Gamma-glutamyl phosphate reductase"/>
    <property type="match status" value="1"/>
</dbReference>
<dbReference type="Gene3D" id="3.40.605.10">
    <property type="entry name" value="Aldehyde Dehydrogenase, Chain A, domain 1"/>
    <property type="match status" value="1"/>
</dbReference>
<dbReference type="Gene3D" id="3.40.309.10">
    <property type="entry name" value="Aldehyde Dehydrogenase, Chain A, domain 2"/>
    <property type="match status" value="1"/>
</dbReference>
<dbReference type="HAMAP" id="MF_00412">
    <property type="entry name" value="ProA"/>
    <property type="match status" value="1"/>
</dbReference>
<dbReference type="InterPro" id="IPR016161">
    <property type="entry name" value="Ald_DH/histidinol_DH"/>
</dbReference>
<dbReference type="InterPro" id="IPR016163">
    <property type="entry name" value="Ald_DH_C"/>
</dbReference>
<dbReference type="InterPro" id="IPR016162">
    <property type="entry name" value="Ald_DH_N"/>
</dbReference>
<dbReference type="InterPro" id="IPR015590">
    <property type="entry name" value="Aldehyde_DH_dom"/>
</dbReference>
<dbReference type="InterPro" id="IPR020593">
    <property type="entry name" value="G-glutamylP_reductase_CS"/>
</dbReference>
<dbReference type="InterPro" id="IPR012134">
    <property type="entry name" value="Glu-5-SA_DH"/>
</dbReference>
<dbReference type="InterPro" id="IPR000965">
    <property type="entry name" value="GPR_dom"/>
</dbReference>
<dbReference type="NCBIfam" id="NF001221">
    <property type="entry name" value="PRK00197.1"/>
    <property type="match status" value="1"/>
</dbReference>
<dbReference type="NCBIfam" id="TIGR00407">
    <property type="entry name" value="proA"/>
    <property type="match status" value="1"/>
</dbReference>
<dbReference type="PANTHER" id="PTHR11063:SF8">
    <property type="entry name" value="DELTA-1-PYRROLINE-5-CARBOXYLATE SYNTHASE"/>
    <property type="match status" value="1"/>
</dbReference>
<dbReference type="PANTHER" id="PTHR11063">
    <property type="entry name" value="GLUTAMATE SEMIALDEHYDE DEHYDROGENASE"/>
    <property type="match status" value="1"/>
</dbReference>
<dbReference type="Pfam" id="PF00171">
    <property type="entry name" value="Aldedh"/>
    <property type="match status" value="1"/>
</dbReference>
<dbReference type="PIRSF" id="PIRSF000151">
    <property type="entry name" value="GPR"/>
    <property type="match status" value="1"/>
</dbReference>
<dbReference type="SUPFAM" id="SSF53720">
    <property type="entry name" value="ALDH-like"/>
    <property type="match status" value="1"/>
</dbReference>
<dbReference type="PROSITE" id="PS01223">
    <property type="entry name" value="PROA"/>
    <property type="match status" value="1"/>
</dbReference>
<accession>A4W028</accession>
<protein>
    <recommendedName>
        <fullName evidence="1">Gamma-glutamyl phosphate reductase</fullName>
        <shortName evidence="1">GPR</shortName>
        <ecNumber evidence="1">1.2.1.41</ecNumber>
    </recommendedName>
    <alternativeName>
        <fullName evidence="1">Glutamate-5-semialdehyde dehydrogenase</fullName>
    </alternativeName>
    <alternativeName>
        <fullName evidence="1">Glutamyl-gamma-semialdehyde dehydrogenase</fullName>
        <shortName evidence="1">GSA dehydrogenase</shortName>
    </alternativeName>
</protein>
<reference key="1">
    <citation type="journal article" date="2007" name="PLoS ONE">
        <title>A glimpse of streptococcal toxic shock syndrome from comparative genomics of S. suis 2 Chinese isolates.</title>
        <authorList>
            <person name="Chen C."/>
            <person name="Tang J."/>
            <person name="Dong W."/>
            <person name="Wang C."/>
            <person name="Feng Y."/>
            <person name="Wang J."/>
            <person name="Zheng F."/>
            <person name="Pan X."/>
            <person name="Liu D."/>
            <person name="Li M."/>
            <person name="Song Y."/>
            <person name="Zhu X."/>
            <person name="Sun H."/>
            <person name="Feng T."/>
            <person name="Guo Z."/>
            <person name="Ju A."/>
            <person name="Ge J."/>
            <person name="Dong Y."/>
            <person name="Sun W."/>
            <person name="Jiang Y."/>
            <person name="Wang J."/>
            <person name="Yan J."/>
            <person name="Yang H."/>
            <person name="Wang X."/>
            <person name="Gao G.F."/>
            <person name="Yang R."/>
            <person name="Wang J."/>
            <person name="Yu J."/>
        </authorList>
    </citation>
    <scope>NUCLEOTIDE SEQUENCE [LARGE SCALE GENOMIC DNA]</scope>
    <source>
        <strain>98HAH33</strain>
    </source>
</reference>
<keyword id="KW-0028">Amino-acid biosynthesis</keyword>
<keyword id="KW-0963">Cytoplasm</keyword>
<keyword id="KW-0521">NADP</keyword>
<keyword id="KW-0560">Oxidoreductase</keyword>
<keyword id="KW-0641">Proline biosynthesis</keyword>
<sequence length="412" mass="43863">MTTTQVLLDSLLANKASINLATTEQKNQALSAMADQLVAQTEAILAGNAIDMEHAQGKISQVMQDRLLLTEERIEAMADGIRALIGLPDPVGLVLEESTRADGLNICKKSIPFGLVGMIYESRPNVTSDAAALAIKSGNAVILRGGKEAFHSAKAIVTALKSGLEEAGVSPKVIELVQDTSRVSATELMTAKGKIDLLVPRGGAGLIQAVVENATVPVIETGTGICHVYVDKDADLDKALRIVVNAKTSRPSVCNAAEVLLVHEEIASQFLPRLEEALSGQVELRADSQAQALLNQARPAGDQDFDTEFLDYIMAVKVVSSVEEAISHIAQHSTGHSEAIVTENSQTAEHFTLHVDSAAVYVNASTRFTDGGEFGLGCELGISTQKMHARGPMGLREMTTYKYIITGDGHIR</sequence>
<name>PROA_STRS2</name>